<protein>
    <recommendedName>
        <fullName evidence="1">Endoribonuclease YbeY</fullName>
        <ecNumber evidence="1">3.1.-.-</ecNumber>
    </recommendedName>
</protein>
<dbReference type="EC" id="3.1.-.-" evidence="1"/>
<dbReference type="EMBL" id="CP000608">
    <property type="protein sequence ID" value="ABO46924.1"/>
    <property type="molecule type" value="Genomic_DNA"/>
</dbReference>
<dbReference type="RefSeq" id="WP_003026298.1">
    <property type="nucleotide sequence ID" value="NC_009257.1"/>
</dbReference>
<dbReference type="SMR" id="A4IYC3"/>
<dbReference type="KEGG" id="ftw:FTW_1112"/>
<dbReference type="HOGENOM" id="CLU_106710_3_3_6"/>
<dbReference type="GO" id="GO:0005737">
    <property type="term" value="C:cytoplasm"/>
    <property type="evidence" value="ECO:0007669"/>
    <property type="project" value="UniProtKB-SubCell"/>
</dbReference>
<dbReference type="GO" id="GO:0004222">
    <property type="term" value="F:metalloendopeptidase activity"/>
    <property type="evidence" value="ECO:0007669"/>
    <property type="project" value="InterPro"/>
</dbReference>
<dbReference type="GO" id="GO:0004521">
    <property type="term" value="F:RNA endonuclease activity"/>
    <property type="evidence" value="ECO:0007669"/>
    <property type="project" value="UniProtKB-UniRule"/>
</dbReference>
<dbReference type="GO" id="GO:0008270">
    <property type="term" value="F:zinc ion binding"/>
    <property type="evidence" value="ECO:0007669"/>
    <property type="project" value="UniProtKB-UniRule"/>
</dbReference>
<dbReference type="GO" id="GO:0006364">
    <property type="term" value="P:rRNA processing"/>
    <property type="evidence" value="ECO:0007669"/>
    <property type="project" value="UniProtKB-UniRule"/>
</dbReference>
<dbReference type="Gene3D" id="3.40.390.30">
    <property type="entry name" value="Metalloproteases ('zincins'), catalytic domain"/>
    <property type="match status" value="1"/>
</dbReference>
<dbReference type="HAMAP" id="MF_00009">
    <property type="entry name" value="Endoribonucl_YbeY"/>
    <property type="match status" value="1"/>
</dbReference>
<dbReference type="InterPro" id="IPR023091">
    <property type="entry name" value="MetalPrtase_cat_dom_sf_prd"/>
</dbReference>
<dbReference type="InterPro" id="IPR002036">
    <property type="entry name" value="YbeY"/>
</dbReference>
<dbReference type="InterPro" id="IPR020549">
    <property type="entry name" value="YbeY_CS"/>
</dbReference>
<dbReference type="NCBIfam" id="TIGR00043">
    <property type="entry name" value="rRNA maturation RNase YbeY"/>
    <property type="match status" value="1"/>
</dbReference>
<dbReference type="PANTHER" id="PTHR46986">
    <property type="entry name" value="ENDORIBONUCLEASE YBEY, CHLOROPLASTIC"/>
    <property type="match status" value="1"/>
</dbReference>
<dbReference type="PANTHER" id="PTHR46986:SF1">
    <property type="entry name" value="ENDORIBONUCLEASE YBEY, CHLOROPLASTIC"/>
    <property type="match status" value="1"/>
</dbReference>
<dbReference type="Pfam" id="PF02130">
    <property type="entry name" value="YbeY"/>
    <property type="match status" value="1"/>
</dbReference>
<dbReference type="SUPFAM" id="SSF55486">
    <property type="entry name" value="Metalloproteases ('zincins'), catalytic domain"/>
    <property type="match status" value="1"/>
</dbReference>
<dbReference type="PROSITE" id="PS01306">
    <property type="entry name" value="UPF0054"/>
    <property type="match status" value="1"/>
</dbReference>
<sequence>MDNLNINFINDDEHPIPSQDLLLKCLQLVADKHHISHAEVNLNIVSNDEIQQINKQFRNKDKPTNIISFKFEKPQGLPDDIANDFLGDIVIAPAVLENEAKEQNKELNDHWQHIFIHGLLHLLGYNHQDDQEAEVMENLEIQLLAQLGIANPYIEQENQNGR</sequence>
<feature type="chain" id="PRO_1000000721" description="Endoribonuclease YbeY">
    <location>
        <begin position="1"/>
        <end position="162"/>
    </location>
</feature>
<feature type="binding site" evidence="1">
    <location>
        <position position="117"/>
    </location>
    <ligand>
        <name>Zn(2+)</name>
        <dbReference type="ChEBI" id="CHEBI:29105"/>
        <note>catalytic</note>
    </ligand>
</feature>
<feature type="binding site" evidence="1">
    <location>
        <position position="121"/>
    </location>
    <ligand>
        <name>Zn(2+)</name>
        <dbReference type="ChEBI" id="CHEBI:29105"/>
        <note>catalytic</note>
    </ligand>
</feature>
<feature type="binding site" evidence="1">
    <location>
        <position position="127"/>
    </location>
    <ligand>
        <name>Zn(2+)</name>
        <dbReference type="ChEBI" id="CHEBI:29105"/>
        <note>catalytic</note>
    </ligand>
</feature>
<proteinExistence type="inferred from homology"/>
<gene>
    <name evidence="1" type="primary">ybeY</name>
    <name type="ordered locus">FTW_1112</name>
</gene>
<keyword id="KW-0963">Cytoplasm</keyword>
<keyword id="KW-0255">Endonuclease</keyword>
<keyword id="KW-0378">Hydrolase</keyword>
<keyword id="KW-0479">Metal-binding</keyword>
<keyword id="KW-0540">Nuclease</keyword>
<keyword id="KW-0690">Ribosome biogenesis</keyword>
<keyword id="KW-0698">rRNA processing</keyword>
<keyword id="KW-0862">Zinc</keyword>
<accession>A4IYC3</accession>
<reference key="1">
    <citation type="journal article" date="2007" name="PLoS ONE">
        <title>Complete genomic characterization of a pathogenic A.II strain of Francisella tularensis subspecies tularensis.</title>
        <authorList>
            <person name="Beckstrom-Sternberg S.M."/>
            <person name="Auerbach R.K."/>
            <person name="Godbole S."/>
            <person name="Pearson J.V."/>
            <person name="Beckstrom-Sternberg J.S."/>
            <person name="Deng Z."/>
            <person name="Munk C."/>
            <person name="Kubota K."/>
            <person name="Zhou Y."/>
            <person name="Bruce D."/>
            <person name="Noronha J."/>
            <person name="Scheuermann R.H."/>
            <person name="Wang A."/>
            <person name="Wei X."/>
            <person name="Wang J."/>
            <person name="Hao J."/>
            <person name="Wagner D.M."/>
            <person name="Brettin T.S."/>
            <person name="Brown N."/>
            <person name="Gilna P."/>
            <person name="Keim P.S."/>
        </authorList>
    </citation>
    <scope>NUCLEOTIDE SEQUENCE [LARGE SCALE GENOMIC DNA]</scope>
    <source>
        <strain>WY96-3418</strain>
    </source>
</reference>
<evidence type="ECO:0000255" key="1">
    <source>
        <dbReference type="HAMAP-Rule" id="MF_00009"/>
    </source>
</evidence>
<organism>
    <name type="scientific">Francisella tularensis subsp. tularensis (strain WY96-3418)</name>
    <dbReference type="NCBI Taxonomy" id="418136"/>
    <lineage>
        <taxon>Bacteria</taxon>
        <taxon>Pseudomonadati</taxon>
        <taxon>Pseudomonadota</taxon>
        <taxon>Gammaproteobacteria</taxon>
        <taxon>Thiotrichales</taxon>
        <taxon>Francisellaceae</taxon>
        <taxon>Francisella</taxon>
    </lineage>
</organism>
<name>YBEY_FRATW</name>
<comment type="function">
    <text evidence="1">Single strand-specific metallo-endoribonuclease involved in late-stage 70S ribosome quality control and in maturation of the 3' terminus of the 16S rRNA.</text>
</comment>
<comment type="cofactor">
    <cofactor evidence="1">
        <name>Zn(2+)</name>
        <dbReference type="ChEBI" id="CHEBI:29105"/>
    </cofactor>
    <text evidence="1">Binds 1 zinc ion.</text>
</comment>
<comment type="subcellular location">
    <subcellularLocation>
        <location evidence="1">Cytoplasm</location>
    </subcellularLocation>
</comment>
<comment type="similarity">
    <text evidence="1">Belongs to the endoribonuclease YbeY family.</text>
</comment>